<accession>Q2JHZ4</accession>
<name>HEMH_SYNJB</name>
<protein>
    <recommendedName>
        <fullName evidence="1">Ferrochelatase</fullName>
        <ecNumber evidence="1">4.98.1.1</ecNumber>
    </recommendedName>
    <alternativeName>
        <fullName evidence="1">Heme synthase</fullName>
    </alternativeName>
    <alternativeName>
        <fullName evidence="1">Protoheme ferro-lyase</fullName>
    </alternativeName>
</protein>
<proteinExistence type="inferred from homology"/>
<feature type="chain" id="PRO_1000019376" description="Ferrochelatase">
    <location>
        <begin position="1"/>
        <end position="344"/>
    </location>
</feature>
<feature type="binding site" evidence="1">
    <location>
        <position position="196"/>
    </location>
    <ligand>
        <name>Fe cation</name>
        <dbReference type="ChEBI" id="CHEBI:24875"/>
    </ligand>
</feature>
<feature type="binding site" evidence="1">
    <location>
        <position position="277"/>
    </location>
    <ligand>
        <name>Fe cation</name>
        <dbReference type="ChEBI" id="CHEBI:24875"/>
    </ligand>
</feature>
<gene>
    <name evidence="1" type="primary">hemH</name>
    <name type="ordered locus">CYB_2857</name>
</gene>
<evidence type="ECO:0000255" key="1">
    <source>
        <dbReference type="HAMAP-Rule" id="MF_00323"/>
    </source>
</evidence>
<sequence>MSKSGVLLLNLGGPETQADVQPFLYNLFADPELIRLPFPFLQRAFAWAISTLRAEKSRRNYAAIGGGSPLRRITAEQARELQAHLVAEGYDVPVYVAMRYWHPLIESVVQQIKSDGITRLVVLPLYPQYSISTTGSSFKLLDRLWAEDPELACIERRQICSWYDQPQYVQAMARAIREQLDGFAEPEGVHVLFSAHGIPESYVTEAGDPYQREMEACVRLIWKQVGRPNDHTLSYQSRVGSVRWLQPYTERVILELGSRGVKQLLVVPISFVSEHIETLQEIDIEYRELAHRAGIADFRRVPALNADPLFIAGLAALVRPHLLTPGLAAPAFVPAAVGSSLLER</sequence>
<comment type="function">
    <text evidence="1">Catalyzes the ferrous insertion into protoporphyrin IX.</text>
</comment>
<comment type="catalytic activity">
    <reaction evidence="1">
        <text>heme b + 2 H(+) = protoporphyrin IX + Fe(2+)</text>
        <dbReference type="Rhea" id="RHEA:22584"/>
        <dbReference type="ChEBI" id="CHEBI:15378"/>
        <dbReference type="ChEBI" id="CHEBI:29033"/>
        <dbReference type="ChEBI" id="CHEBI:57306"/>
        <dbReference type="ChEBI" id="CHEBI:60344"/>
        <dbReference type="EC" id="4.98.1.1"/>
    </reaction>
</comment>
<comment type="pathway">
    <text evidence="1">Porphyrin-containing compound metabolism; protoheme biosynthesis; protoheme from protoporphyrin-IX: step 1/1.</text>
</comment>
<comment type="subcellular location">
    <subcellularLocation>
        <location evidence="1">Cytoplasm</location>
    </subcellularLocation>
</comment>
<comment type="similarity">
    <text evidence="1">Belongs to the ferrochelatase family.</text>
</comment>
<keyword id="KW-0963">Cytoplasm</keyword>
<keyword id="KW-0350">Heme biosynthesis</keyword>
<keyword id="KW-0408">Iron</keyword>
<keyword id="KW-0456">Lyase</keyword>
<keyword id="KW-0479">Metal-binding</keyword>
<keyword id="KW-0627">Porphyrin biosynthesis</keyword>
<keyword id="KW-1185">Reference proteome</keyword>
<reference key="1">
    <citation type="journal article" date="2007" name="ISME J.">
        <title>Population level functional diversity in a microbial community revealed by comparative genomic and metagenomic analyses.</title>
        <authorList>
            <person name="Bhaya D."/>
            <person name="Grossman A.R."/>
            <person name="Steunou A.-S."/>
            <person name="Khuri N."/>
            <person name="Cohan F.M."/>
            <person name="Hamamura N."/>
            <person name="Melendrez M.C."/>
            <person name="Bateson M.M."/>
            <person name="Ward D.M."/>
            <person name="Heidelberg J.F."/>
        </authorList>
    </citation>
    <scope>NUCLEOTIDE SEQUENCE [LARGE SCALE GENOMIC DNA]</scope>
    <source>
        <strain>JA-2-3B'a(2-13)</strain>
    </source>
</reference>
<organism>
    <name type="scientific">Synechococcus sp. (strain JA-2-3B'a(2-13))</name>
    <name type="common">Cyanobacteria bacterium Yellowstone B-Prime</name>
    <dbReference type="NCBI Taxonomy" id="321332"/>
    <lineage>
        <taxon>Bacteria</taxon>
        <taxon>Bacillati</taxon>
        <taxon>Cyanobacteriota</taxon>
        <taxon>Cyanophyceae</taxon>
        <taxon>Synechococcales</taxon>
        <taxon>Synechococcaceae</taxon>
        <taxon>Synechococcus</taxon>
    </lineage>
</organism>
<dbReference type="EC" id="4.98.1.1" evidence="1"/>
<dbReference type="EMBL" id="CP000240">
    <property type="protein sequence ID" value="ABD03777.1"/>
    <property type="molecule type" value="Genomic_DNA"/>
</dbReference>
<dbReference type="RefSeq" id="WP_011434396.1">
    <property type="nucleotide sequence ID" value="NC_007776.1"/>
</dbReference>
<dbReference type="SMR" id="Q2JHZ4"/>
<dbReference type="STRING" id="321332.CYB_2857"/>
<dbReference type="KEGG" id="cyb:CYB_2857"/>
<dbReference type="eggNOG" id="COG0276">
    <property type="taxonomic scope" value="Bacteria"/>
</dbReference>
<dbReference type="HOGENOM" id="CLU_018884_4_1_3"/>
<dbReference type="OrthoDB" id="9809741at2"/>
<dbReference type="UniPathway" id="UPA00252">
    <property type="reaction ID" value="UER00325"/>
</dbReference>
<dbReference type="Proteomes" id="UP000001938">
    <property type="component" value="Chromosome"/>
</dbReference>
<dbReference type="GO" id="GO:0005737">
    <property type="term" value="C:cytoplasm"/>
    <property type="evidence" value="ECO:0007669"/>
    <property type="project" value="UniProtKB-SubCell"/>
</dbReference>
<dbReference type="GO" id="GO:0004325">
    <property type="term" value="F:ferrochelatase activity"/>
    <property type="evidence" value="ECO:0007669"/>
    <property type="project" value="UniProtKB-UniRule"/>
</dbReference>
<dbReference type="GO" id="GO:0046872">
    <property type="term" value="F:metal ion binding"/>
    <property type="evidence" value="ECO:0007669"/>
    <property type="project" value="UniProtKB-KW"/>
</dbReference>
<dbReference type="GO" id="GO:0006783">
    <property type="term" value="P:heme biosynthetic process"/>
    <property type="evidence" value="ECO:0007669"/>
    <property type="project" value="UniProtKB-UniRule"/>
</dbReference>
<dbReference type="CDD" id="cd00419">
    <property type="entry name" value="Ferrochelatase_C"/>
    <property type="match status" value="1"/>
</dbReference>
<dbReference type="CDD" id="cd03411">
    <property type="entry name" value="Ferrochelatase_N"/>
    <property type="match status" value="1"/>
</dbReference>
<dbReference type="FunFam" id="3.40.50.1400:FF:000006">
    <property type="entry name" value="Ferrochelatase"/>
    <property type="match status" value="1"/>
</dbReference>
<dbReference type="Gene3D" id="3.40.50.1400">
    <property type="match status" value="2"/>
</dbReference>
<dbReference type="HAMAP" id="MF_00323">
    <property type="entry name" value="Ferrochelatase"/>
    <property type="match status" value="1"/>
</dbReference>
<dbReference type="InterPro" id="IPR001015">
    <property type="entry name" value="Ferrochelatase"/>
</dbReference>
<dbReference type="InterPro" id="IPR019772">
    <property type="entry name" value="Ferrochelatase_AS"/>
</dbReference>
<dbReference type="InterPro" id="IPR033644">
    <property type="entry name" value="Ferrochelatase_C"/>
</dbReference>
<dbReference type="InterPro" id="IPR033659">
    <property type="entry name" value="Ferrochelatase_N"/>
</dbReference>
<dbReference type="NCBIfam" id="TIGR00109">
    <property type="entry name" value="hemH"/>
    <property type="match status" value="1"/>
</dbReference>
<dbReference type="PANTHER" id="PTHR11108">
    <property type="entry name" value="FERROCHELATASE"/>
    <property type="match status" value="1"/>
</dbReference>
<dbReference type="PANTHER" id="PTHR11108:SF1">
    <property type="entry name" value="FERROCHELATASE, MITOCHONDRIAL"/>
    <property type="match status" value="1"/>
</dbReference>
<dbReference type="Pfam" id="PF00762">
    <property type="entry name" value="Ferrochelatase"/>
    <property type="match status" value="1"/>
</dbReference>
<dbReference type="SUPFAM" id="SSF53800">
    <property type="entry name" value="Chelatase"/>
    <property type="match status" value="1"/>
</dbReference>
<dbReference type="PROSITE" id="PS00534">
    <property type="entry name" value="FERROCHELATASE"/>
    <property type="match status" value="1"/>
</dbReference>